<accession>A8F866</accession>
<gene>
    <name evidence="1" type="primary">alaS</name>
    <name type="ordered locus">Tlet_1796</name>
</gene>
<keyword id="KW-0030">Aminoacyl-tRNA synthetase</keyword>
<keyword id="KW-0067">ATP-binding</keyword>
<keyword id="KW-0963">Cytoplasm</keyword>
<keyword id="KW-0436">Ligase</keyword>
<keyword id="KW-0479">Metal-binding</keyword>
<keyword id="KW-0547">Nucleotide-binding</keyword>
<keyword id="KW-0648">Protein biosynthesis</keyword>
<keyword id="KW-1185">Reference proteome</keyword>
<keyword id="KW-0694">RNA-binding</keyword>
<keyword id="KW-0820">tRNA-binding</keyword>
<keyword id="KW-0862">Zinc</keyword>
<evidence type="ECO:0000255" key="1">
    <source>
        <dbReference type="HAMAP-Rule" id="MF_00036"/>
    </source>
</evidence>
<feature type="chain" id="PRO_0000347850" description="Alanine--tRNA ligase">
    <location>
        <begin position="1"/>
        <end position="858"/>
    </location>
</feature>
<feature type="binding site" evidence="1">
    <location>
        <position position="550"/>
    </location>
    <ligand>
        <name>Zn(2+)</name>
        <dbReference type="ChEBI" id="CHEBI:29105"/>
    </ligand>
</feature>
<feature type="binding site" evidence="1">
    <location>
        <position position="554"/>
    </location>
    <ligand>
        <name>Zn(2+)</name>
        <dbReference type="ChEBI" id="CHEBI:29105"/>
    </ligand>
</feature>
<feature type="binding site" evidence="1">
    <location>
        <position position="652"/>
    </location>
    <ligand>
        <name>Zn(2+)</name>
        <dbReference type="ChEBI" id="CHEBI:29105"/>
    </ligand>
</feature>
<feature type="binding site" evidence="1">
    <location>
        <position position="656"/>
    </location>
    <ligand>
        <name>Zn(2+)</name>
        <dbReference type="ChEBI" id="CHEBI:29105"/>
    </ligand>
</feature>
<reference key="1">
    <citation type="submission" date="2007-08" db="EMBL/GenBank/DDBJ databases">
        <title>Complete sequence of Thermotoga lettingae TMO.</title>
        <authorList>
            <consortium name="US DOE Joint Genome Institute"/>
            <person name="Copeland A."/>
            <person name="Lucas S."/>
            <person name="Lapidus A."/>
            <person name="Barry K."/>
            <person name="Glavina del Rio T."/>
            <person name="Dalin E."/>
            <person name="Tice H."/>
            <person name="Pitluck S."/>
            <person name="Foster B."/>
            <person name="Bruce D."/>
            <person name="Schmutz J."/>
            <person name="Larimer F."/>
            <person name="Land M."/>
            <person name="Hauser L."/>
            <person name="Kyrpides N."/>
            <person name="Mikhailova N."/>
            <person name="Nelson K."/>
            <person name="Gogarten J.P."/>
            <person name="Noll K."/>
            <person name="Richardson P."/>
        </authorList>
    </citation>
    <scope>NUCLEOTIDE SEQUENCE [LARGE SCALE GENOMIC DNA]</scope>
    <source>
        <strain>ATCC BAA-301 / DSM 14385 / NBRC 107922 / TMO</strain>
    </source>
</reference>
<proteinExistence type="inferred from homology"/>
<protein>
    <recommendedName>
        <fullName evidence="1">Alanine--tRNA ligase</fullName>
        <ecNumber evidence="1">6.1.1.7</ecNumber>
    </recommendedName>
    <alternativeName>
        <fullName evidence="1">Alanyl-tRNA synthetase</fullName>
        <shortName evidence="1">AlaRS</shortName>
    </alternativeName>
</protein>
<comment type="function">
    <text evidence="1">Catalyzes the attachment of alanine to tRNA(Ala) in a two-step reaction: alanine is first activated by ATP to form Ala-AMP and then transferred to the acceptor end of tRNA(Ala). Also edits incorrectly charged Ser-tRNA(Ala) and Gly-tRNA(Ala) via its editing domain.</text>
</comment>
<comment type="catalytic activity">
    <reaction evidence="1">
        <text>tRNA(Ala) + L-alanine + ATP = L-alanyl-tRNA(Ala) + AMP + diphosphate</text>
        <dbReference type="Rhea" id="RHEA:12540"/>
        <dbReference type="Rhea" id="RHEA-COMP:9657"/>
        <dbReference type="Rhea" id="RHEA-COMP:9923"/>
        <dbReference type="ChEBI" id="CHEBI:30616"/>
        <dbReference type="ChEBI" id="CHEBI:33019"/>
        <dbReference type="ChEBI" id="CHEBI:57972"/>
        <dbReference type="ChEBI" id="CHEBI:78442"/>
        <dbReference type="ChEBI" id="CHEBI:78497"/>
        <dbReference type="ChEBI" id="CHEBI:456215"/>
        <dbReference type="EC" id="6.1.1.7"/>
    </reaction>
</comment>
<comment type="cofactor">
    <cofactor evidence="1">
        <name>Zn(2+)</name>
        <dbReference type="ChEBI" id="CHEBI:29105"/>
    </cofactor>
    <text evidence="1">Binds 1 zinc ion per subunit.</text>
</comment>
<comment type="subcellular location">
    <subcellularLocation>
        <location evidence="1">Cytoplasm</location>
    </subcellularLocation>
</comment>
<comment type="domain">
    <text evidence="1">Consists of three domains; the N-terminal catalytic domain, the editing domain and the C-terminal C-Ala domain. The editing domain removes incorrectly charged amino acids, while the C-Ala domain, along with tRNA(Ala), serves as a bridge to cooperatively bring together the editing and aminoacylation centers thus stimulating deacylation of misacylated tRNAs.</text>
</comment>
<comment type="similarity">
    <text evidence="1">Belongs to the class-II aminoacyl-tRNA synthetase family.</text>
</comment>
<name>SYA_PSELT</name>
<dbReference type="EC" id="6.1.1.7" evidence="1"/>
<dbReference type="EMBL" id="CP000812">
    <property type="protein sequence ID" value="ABV34350.1"/>
    <property type="molecule type" value="Genomic_DNA"/>
</dbReference>
<dbReference type="RefSeq" id="WP_012003826.1">
    <property type="nucleotide sequence ID" value="NZ_BSDV01000001.1"/>
</dbReference>
<dbReference type="SMR" id="A8F866"/>
<dbReference type="STRING" id="416591.Tlet_1796"/>
<dbReference type="KEGG" id="tle:Tlet_1796"/>
<dbReference type="eggNOG" id="COG0013">
    <property type="taxonomic scope" value="Bacteria"/>
</dbReference>
<dbReference type="HOGENOM" id="CLU_004485_1_1_0"/>
<dbReference type="OrthoDB" id="9803884at2"/>
<dbReference type="Proteomes" id="UP000002016">
    <property type="component" value="Chromosome"/>
</dbReference>
<dbReference type="GO" id="GO:0005829">
    <property type="term" value="C:cytosol"/>
    <property type="evidence" value="ECO:0007669"/>
    <property type="project" value="TreeGrafter"/>
</dbReference>
<dbReference type="GO" id="GO:0004813">
    <property type="term" value="F:alanine-tRNA ligase activity"/>
    <property type="evidence" value="ECO:0007669"/>
    <property type="project" value="UniProtKB-UniRule"/>
</dbReference>
<dbReference type="GO" id="GO:0002161">
    <property type="term" value="F:aminoacyl-tRNA deacylase activity"/>
    <property type="evidence" value="ECO:0007669"/>
    <property type="project" value="TreeGrafter"/>
</dbReference>
<dbReference type="GO" id="GO:0005524">
    <property type="term" value="F:ATP binding"/>
    <property type="evidence" value="ECO:0007669"/>
    <property type="project" value="UniProtKB-UniRule"/>
</dbReference>
<dbReference type="GO" id="GO:0000049">
    <property type="term" value="F:tRNA binding"/>
    <property type="evidence" value="ECO:0007669"/>
    <property type="project" value="UniProtKB-KW"/>
</dbReference>
<dbReference type="GO" id="GO:0008270">
    <property type="term" value="F:zinc ion binding"/>
    <property type="evidence" value="ECO:0007669"/>
    <property type="project" value="UniProtKB-UniRule"/>
</dbReference>
<dbReference type="GO" id="GO:0006419">
    <property type="term" value="P:alanyl-tRNA aminoacylation"/>
    <property type="evidence" value="ECO:0007669"/>
    <property type="project" value="UniProtKB-UniRule"/>
</dbReference>
<dbReference type="CDD" id="cd00673">
    <property type="entry name" value="AlaRS_core"/>
    <property type="match status" value="1"/>
</dbReference>
<dbReference type="FunFam" id="3.10.310.40:FF:000001">
    <property type="entry name" value="Alanine--tRNA ligase"/>
    <property type="match status" value="1"/>
</dbReference>
<dbReference type="FunFam" id="3.30.54.20:FF:000001">
    <property type="entry name" value="Alanine--tRNA ligase"/>
    <property type="match status" value="1"/>
</dbReference>
<dbReference type="FunFam" id="3.30.930.10:FF:000004">
    <property type="entry name" value="Alanine--tRNA ligase"/>
    <property type="match status" value="1"/>
</dbReference>
<dbReference type="FunFam" id="3.30.980.10:FF:000004">
    <property type="entry name" value="Alanine--tRNA ligase, cytoplasmic"/>
    <property type="match status" value="1"/>
</dbReference>
<dbReference type="Gene3D" id="2.40.30.130">
    <property type="match status" value="1"/>
</dbReference>
<dbReference type="Gene3D" id="3.10.310.40">
    <property type="match status" value="1"/>
</dbReference>
<dbReference type="Gene3D" id="3.30.54.20">
    <property type="match status" value="1"/>
</dbReference>
<dbReference type="Gene3D" id="6.10.250.550">
    <property type="match status" value="1"/>
</dbReference>
<dbReference type="Gene3D" id="3.30.930.10">
    <property type="entry name" value="Bira Bifunctional Protein, Domain 2"/>
    <property type="match status" value="1"/>
</dbReference>
<dbReference type="Gene3D" id="3.30.980.10">
    <property type="entry name" value="Threonyl-trna Synthetase, Chain A, domain 2"/>
    <property type="match status" value="1"/>
</dbReference>
<dbReference type="HAMAP" id="MF_00036_B">
    <property type="entry name" value="Ala_tRNA_synth_B"/>
    <property type="match status" value="1"/>
</dbReference>
<dbReference type="InterPro" id="IPR045864">
    <property type="entry name" value="aa-tRNA-synth_II/BPL/LPL"/>
</dbReference>
<dbReference type="InterPro" id="IPR002318">
    <property type="entry name" value="Ala-tRNA-lgiase_IIc"/>
</dbReference>
<dbReference type="InterPro" id="IPR018162">
    <property type="entry name" value="Ala-tRNA-ligase_IIc_anticod-bd"/>
</dbReference>
<dbReference type="InterPro" id="IPR018165">
    <property type="entry name" value="Ala-tRNA-synth_IIc_core"/>
</dbReference>
<dbReference type="InterPro" id="IPR018164">
    <property type="entry name" value="Ala-tRNA-synth_IIc_N"/>
</dbReference>
<dbReference type="InterPro" id="IPR050058">
    <property type="entry name" value="Ala-tRNA_ligase"/>
</dbReference>
<dbReference type="InterPro" id="IPR023033">
    <property type="entry name" value="Ala_tRNA_ligase_euk/bac"/>
</dbReference>
<dbReference type="InterPro" id="IPR003156">
    <property type="entry name" value="DHHA1_dom"/>
</dbReference>
<dbReference type="InterPro" id="IPR018163">
    <property type="entry name" value="Thr/Ala-tRNA-synth_IIc_edit"/>
</dbReference>
<dbReference type="InterPro" id="IPR009000">
    <property type="entry name" value="Transl_B-barrel_sf"/>
</dbReference>
<dbReference type="InterPro" id="IPR012947">
    <property type="entry name" value="tRNA_SAD"/>
</dbReference>
<dbReference type="NCBIfam" id="TIGR00344">
    <property type="entry name" value="alaS"/>
    <property type="match status" value="1"/>
</dbReference>
<dbReference type="PANTHER" id="PTHR11777:SF9">
    <property type="entry name" value="ALANINE--TRNA LIGASE, CYTOPLASMIC"/>
    <property type="match status" value="1"/>
</dbReference>
<dbReference type="PANTHER" id="PTHR11777">
    <property type="entry name" value="ALANYL-TRNA SYNTHETASE"/>
    <property type="match status" value="1"/>
</dbReference>
<dbReference type="Pfam" id="PF02272">
    <property type="entry name" value="DHHA1"/>
    <property type="match status" value="1"/>
</dbReference>
<dbReference type="Pfam" id="PF01411">
    <property type="entry name" value="tRNA-synt_2c"/>
    <property type="match status" value="1"/>
</dbReference>
<dbReference type="Pfam" id="PF07973">
    <property type="entry name" value="tRNA_SAD"/>
    <property type="match status" value="1"/>
</dbReference>
<dbReference type="PRINTS" id="PR00980">
    <property type="entry name" value="TRNASYNTHALA"/>
</dbReference>
<dbReference type="SMART" id="SM00863">
    <property type="entry name" value="tRNA_SAD"/>
    <property type="match status" value="1"/>
</dbReference>
<dbReference type="SUPFAM" id="SSF55681">
    <property type="entry name" value="Class II aaRS and biotin synthetases"/>
    <property type="match status" value="1"/>
</dbReference>
<dbReference type="SUPFAM" id="SSF101353">
    <property type="entry name" value="Putative anticodon-binding domain of alanyl-tRNA synthetase (AlaRS)"/>
    <property type="match status" value="1"/>
</dbReference>
<dbReference type="SUPFAM" id="SSF55186">
    <property type="entry name" value="ThrRS/AlaRS common domain"/>
    <property type="match status" value="1"/>
</dbReference>
<dbReference type="SUPFAM" id="SSF50447">
    <property type="entry name" value="Translation proteins"/>
    <property type="match status" value="1"/>
</dbReference>
<dbReference type="PROSITE" id="PS50860">
    <property type="entry name" value="AA_TRNA_LIGASE_II_ALA"/>
    <property type="match status" value="1"/>
</dbReference>
<organism>
    <name type="scientific">Pseudothermotoga lettingae (strain ATCC BAA-301 / DSM 14385 / NBRC 107922 / TMO)</name>
    <name type="common">Thermotoga lettingae</name>
    <dbReference type="NCBI Taxonomy" id="416591"/>
    <lineage>
        <taxon>Bacteria</taxon>
        <taxon>Thermotogati</taxon>
        <taxon>Thermotogota</taxon>
        <taxon>Thermotogae</taxon>
        <taxon>Thermotogales</taxon>
        <taxon>Thermotogaceae</taxon>
        <taxon>Pseudothermotoga</taxon>
    </lineage>
</organism>
<sequence>MTGDELRSAFLRFFEKKGHKILPSASLIPDDPQLLFTVAGMVPFKPIFWGKVEPVYTRVTTCQKCLRTNDIENVGRTPRHQTFFEMLGNFSFGDYFKKEAIIWAWEFVTEVLKLEKDRLWITVYEEDEESFKIWKDIVGVCEKKIIRMGKDTNFWGPAGPTGPCGPCSEIHYDTGLNEDCSDGECTPANSDKRFLEIWNLVFTEFYQDEKGALYPLPRKNIDTGAGLERVASVVQKVESNFETDIFKPIISKIEDVLGVEYKKDEQKDISIRVIADHSRAVSFLIADGVFPSNEERGYVLRRILRRAVRHGVLLGAQKPFLHLINETVIEHMGNTYSELKNRKDLILEVTRAEEERFFKTISQGNEMLRDIISRSSKVIDGEDVFKLYDTYGFPPDIVVDVAKDYNLKVDLEGFEKLMKIQRERARSARNNVEYAKSQEIYDELAQKSKTVFVGYDTLECEAKVIFLKKSGTKYEAVFDKTSFYAERGGQVSDVGQIVWDGGSASVEHVFIPVEGIIVHIINVEKGELKEGTKVRLIVDREKRLSTARNHTATHLLHAALRKVLGTHVKQAGSLVTPEKLRFDFTHHKPLTDNELMSIENMVNEIILRSIPVITEEKSYKEAVAEGAIALFGEKYGDVVRVVKVHSFSEELCGGTHVKNTGNIGLFRIVSESAISSGTRRIEAITGFNTLNYLRVKEQLVGNICEKLGTSQDEILSKIENLIEKNINLQKELQQFKSKLLVSQLKQTPFEQIKNIRFVHCVFNDIESNELRNLSDIAVAGENSTVALLFSTSKDKVNLIVRVTQDLAKKIKAGDIAKYAAQILEGGGGGRPDFAQAGGKDPSKINSVIEYTRKLLEQN</sequence>